<accession>Q76MX2</accession>
<comment type="function">
    <text evidence="4">The cyanoalanine synthesis reaction is more efficient than the cysteine synthase activity. Probably involved in detoxification of toxic cyanide produced in plant tissues.</text>
</comment>
<comment type="catalytic activity">
    <reaction evidence="3 4">
        <text>O-acetyl-L-serine + hydrogen sulfide = L-cysteine + acetate</text>
        <dbReference type="Rhea" id="RHEA:14829"/>
        <dbReference type="ChEBI" id="CHEBI:29919"/>
        <dbReference type="ChEBI" id="CHEBI:30089"/>
        <dbReference type="ChEBI" id="CHEBI:35235"/>
        <dbReference type="ChEBI" id="CHEBI:58340"/>
        <dbReference type="EC" id="2.5.1.47"/>
    </reaction>
</comment>
<comment type="catalytic activity">
    <reaction evidence="3 4">
        <text>hydrogen cyanide + L-cysteine = 3-cyano-L-alanine + hydrogen sulfide + H(+)</text>
        <dbReference type="Rhea" id="RHEA:17821"/>
        <dbReference type="ChEBI" id="CHEBI:15378"/>
        <dbReference type="ChEBI" id="CHEBI:18407"/>
        <dbReference type="ChEBI" id="CHEBI:29919"/>
        <dbReference type="ChEBI" id="CHEBI:35235"/>
        <dbReference type="ChEBI" id="CHEBI:77860"/>
        <dbReference type="EC" id="4.4.1.9"/>
    </reaction>
</comment>
<comment type="cofactor">
    <cofactor evidence="5">
        <name>pyridoxal 5'-phosphate</name>
        <dbReference type="ChEBI" id="CHEBI:597326"/>
    </cofactor>
</comment>
<comment type="biophysicochemical properties">
    <kinetics>
        <KM evidence="3 4">2.76 mM for L-cysteine for the L-3-cyanoalanine synthase activity (in the presence of 5 mM KCN)</KM>
        <KM evidence="3 4">0.134 mM for CN for the L-3-cyanoalanine synthase activity (in the presence of 5 mM L-cysteine)</KM>
        <KM evidence="3 4">2.77 mM for O(3)-acetyl-L-serine for the cysteine synthase activity (in the presence of 2.5 mM Na(2)S)</KM>
        <KM evidence="3 4">0.746 mM for Na(2)S for the cysteine synthase activity (in the presence of 10 mM O(3)-acetyl-L-serine)</KM>
    </kinetics>
    <phDependence>
        <text evidence="3 4">Optimum pH is 8.0-9.0.</text>
    </phDependence>
</comment>
<comment type="subunit">
    <text evidence="3">Homodimer.</text>
</comment>
<comment type="subcellular location">
    <subcellularLocation>
        <location evidence="5">Mitochondrion</location>
    </subcellularLocation>
</comment>
<comment type="tissue specificity">
    <text evidence="4">Expressed in tubers and buds. Detected in leaves.</text>
</comment>
<comment type="induction">
    <text evidence="4">Up-regulated at the protein level by ethylene and 1-Aminocyclopropane-1-carboxylic acid or naphthalene acetic acid treatments. Down-regulated at transcript level by methyl jasmonate. No effect from wounding.</text>
</comment>
<comment type="similarity">
    <text evidence="5">Belongs to the cysteine synthase/cystathionine beta-synthase family.</text>
</comment>
<sequence>MASLLRRRFYSSESSFAQRLRDLPKYLPGTNIKTQVSQLIGKTPLVYLNKVSEGCGAYIAVKQEMMQPTSSIKDRPAFAMINDAEKKGLITPGKTTLIEPTSGNMGISMAFMAAMKGYKMILTMPSYTSLERRVTMRAFGADLVTTDPTKGMGGTIKKAYDLLESTPNAYMLQQFSNPANTQAHFETTGPEIWEDTQGNVDIFVMGIGSGGTVSGVGQYLKSKNPNVKIYGIEPTESNVLNGGNPGPHEITGNGVGFKPDILDMDVMEEVLMVSSEESVNMARELALKEGLMVGISSGANTVAALRLANRPENKGKLIVTIHPSFGERYLSSVLYEDIRKEAQNMQPVSVD</sequence>
<organism>
    <name type="scientific">Solanum tuberosum</name>
    <name type="common">Potato</name>
    <dbReference type="NCBI Taxonomy" id="4113"/>
    <lineage>
        <taxon>Eukaryota</taxon>
        <taxon>Viridiplantae</taxon>
        <taxon>Streptophyta</taxon>
        <taxon>Embryophyta</taxon>
        <taxon>Tracheophyta</taxon>
        <taxon>Spermatophyta</taxon>
        <taxon>Magnoliopsida</taxon>
        <taxon>eudicotyledons</taxon>
        <taxon>Gunneridae</taxon>
        <taxon>Pentapetalae</taxon>
        <taxon>asterids</taxon>
        <taxon>lamiids</taxon>
        <taxon>Solanales</taxon>
        <taxon>Solanaceae</taxon>
        <taxon>Solanoideae</taxon>
        <taxon>Solaneae</taxon>
        <taxon>Solanum</taxon>
    </lineage>
</organism>
<name>CAS1_SOLTU</name>
<reference key="1">
    <citation type="journal article" date="2001" name="Plant Mol. Biol.">
        <title>Beta-cyanoalanine synthase and cysteine synthase from potato: molecular cloning, biochemical characterization, and spatial and hormonal regulation.</title>
        <authorList>
            <person name="Maruyama A."/>
            <person name="Saito K."/>
            <person name="Ishizawa K."/>
        </authorList>
    </citation>
    <scope>NUCLEOTIDE SEQUENCE [MRNA]</scope>
    <scope>CATALYTIC ACTIVITY</scope>
    <scope>BIOPHYSICOCHEMICAL PROPERTIES</scope>
    <scope>TISSUE SPECIFICITY</scope>
    <scope>INDUCTION BY ETHYLENE METHYL JASMONATE AND WOUNDING</scope>
    <scope>FUNCTION</scope>
    <source>
        <strain>cv. Dansyaku</strain>
    </source>
</reference>
<reference key="2">
    <citation type="journal article" date="2000" name="Plant Cell Physiol.">
        <title>Purification and characterization of beta-cyanoalanine synthase and cysteine synthases from potato tubers: are beta-cyanoalanine synthase and mitochondrial cysteine synthase same enzyme?</title>
        <authorList>
            <person name="Maruyama A."/>
            <person name="Ishizawa K."/>
            <person name="Takagi T."/>
        </authorList>
    </citation>
    <scope>PROTEIN SEQUENCE OF 76-84 AND 316-332</scope>
    <scope>CATALYTIC ACTIVITY</scope>
    <scope>BIOPHYSICOCHEMICAL PROPERTIES</scope>
    <scope>SUBUNIT</scope>
    <source>
        <strain>cv. Dansyaku</strain>
    </source>
</reference>
<feature type="transit peptide" description="Mitochondrion" evidence="2">
    <location>
        <begin position="1"/>
        <end position="10"/>
    </location>
</feature>
<feature type="chain" id="PRO_0000418637" description="Bifunctional L-3-cyanoalanine synthase/cysteine synthase 1, mitochondrial">
    <location>
        <begin position="11"/>
        <end position="351"/>
    </location>
</feature>
<feature type="binding site" evidence="1">
    <location>
        <position position="104"/>
    </location>
    <ligand>
        <name>pyridoxal 5'-phosphate</name>
        <dbReference type="ChEBI" id="CHEBI:597326"/>
    </ligand>
</feature>
<feature type="binding site" evidence="1">
    <location>
        <begin position="208"/>
        <end position="212"/>
    </location>
    <ligand>
        <name>pyridoxal 5'-phosphate</name>
        <dbReference type="ChEBI" id="CHEBI:597326"/>
    </ligand>
</feature>
<feature type="binding site" evidence="1">
    <location>
        <position position="296"/>
    </location>
    <ligand>
        <name>pyridoxal 5'-phosphate</name>
        <dbReference type="ChEBI" id="CHEBI:597326"/>
    </ligand>
</feature>
<feature type="modified residue" description="N6-(pyridoxal phosphate)lysine" evidence="1">
    <location>
        <position position="73"/>
    </location>
</feature>
<feature type="sequence conflict" description="In Ref. 2; AA sequence." evidence="5" ref="2">
    <original>H</original>
    <variation>W</variation>
    <location>
        <position position="322"/>
    </location>
</feature>
<keyword id="KW-0028">Amino-acid biosynthesis</keyword>
<keyword id="KW-0198">Cysteine biosynthesis</keyword>
<keyword id="KW-0903">Direct protein sequencing</keyword>
<keyword id="KW-0456">Lyase</keyword>
<keyword id="KW-0496">Mitochondrion</keyword>
<keyword id="KW-0663">Pyridoxal phosphate</keyword>
<keyword id="KW-1185">Reference proteome</keyword>
<keyword id="KW-0808">Transferase</keyword>
<keyword id="KW-0809">Transit peptide</keyword>
<proteinExistence type="evidence at protein level"/>
<gene>
    <name type="primary">PCAS-1</name>
</gene>
<dbReference type="EC" id="2.5.1.47" evidence="3 4"/>
<dbReference type="EC" id="4.4.1.9" evidence="3 4"/>
<dbReference type="EMBL" id="AB027000">
    <property type="protein sequence ID" value="BAB18760.1"/>
    <property type="molecule type" value="mRNA"/>
</dbReference>
<dbReference type="RefSeq" id="NP_001305620.1">
    <property type="nucleotide sequence ID" value="NM_001318691.1"/>
</dbReference>
<dbReference type="SMR" id="Q76MX2"/>
<dbReference type="FunCoup" id="Q76MX2">
    <property type="interactions" value="1297"/>
</dbReference>
<dbReference type="IntAct" id="Q76MX2">
    <property type="interactions" value="1"/>
</dbReference>
<dbReference type="STRING" id="4113.Q76MX2"/>
<dbReference type="PaxDb" id="4113-PGSC0003DMT400016646"/>
<dbReference type="GeneID" id="102604154"/>
<dbReference type="KEGG" id="sot:102604154"/>
<dbReference type="eggNOG" id="KOG1252">
    <property type="taxonomic scope" value="Eukaryota"/>
</dbReference>
<dbReference type="InParanoid" id="Q76MX2"/>
<dbReference type="OrthoDB" id="10259545at2759"/>
<dbReference type="BRENDA" id="4.4.1.9">
    <property type="organism ID" value="5757"/>
</dbReference>
<dbReference type="SABIO-RK" id="Q76MX2"/>
<dbReference type="Proteomes" id="UP000011115">
    <property type="component" value="Unassembled WGS sequence"/>
</dbReference>
<dbReference type="ExpressionAtlas" id="Q76MX2">
    <property type="expression patterns" value="baseline and differential"/>
</dbReference>
<dbReference type="GO" id="GO:0005737">
    <property type="term" value="C:cytoplasm"/>
    <property type="evidence" value="ECO:0000318"/>
    <property type="project" value="GO_Central"/>
</dbReference>
<dbReference type="GO" id="GO:0005739">
    <property type="term" value="C:mitochondrion"/>
    <property type="evidence" value="ECO:0007669"/>
    <property type="project" value="UniProtKB-SubCell"/>
</dbReference>
<dbReference type="GO" id="GO:0004124">
    <property type="term" value="F:cysteine synthase activity"/>
    <property type="evidence" value="ECO:0000314"/>
    <property type="project" value="UniProtKB"/>
</dbReference>
<dbReference type="GO" id="GO:0050017">
    <property type="term" value="F:L-3-cyanoalanine synthase activity"/>
    <property type="evidence" value="ECO:0000314"/>
    <property type="project" value="UniProtKB"/>
</dbReference>
<dbReference type="GO" id="GO:0019499">
    <property type="term" value="P:cyanide metabolic process"/>
    <property type="evidence" value="ECO:0000314"/>
    <property type="project" value="UniProtKB"/>
</dbReference>
<dbReference type="GO" id="GO:0006535">
    <property type="term" value="P:cysteine biosynthetic process from serine"/>
    <property type="evidence" value="ECO:0000318"/>
    <property type="project" value="GO_Central"/>
</dbReference>
<dbReference type="GO" id="GO:0006534">
    <property type="term" value="P:cysteine metabolic process"/>
    <property type="evidence" value="ECO:0000314"/>
    <property type="project" value="UniProtKB"/>
</dbReference>
<dbReference type="CDD" id="cd01561">
    <property type="entry name" value="CBS_like"/>
    <property type="match status" value="1"/>
</dbReference>
<dbReference type="FunFam" id="3.40.50.1100:FF:000006">
    <property type="entry name" value="Cysteine synthase"/>
    <property type="match status" value="1"/>
</dbReference>
<dbReference type="FunFam" id="3.40.50.1100:FF:000130">
    <property type="entry name" value="Cysteine synthase"/>
    <property type="match status" value="1"/>
</dbReference>
<dbReference type="Gene3D" id="3.40.50.1100">
    <property type="match status" value="2"/>
</dbReference>
<dbReference type="InterPro" id="IPR005856">
    <property type="entry name" value="Cys_synth"/>
</dbReference>
<dbReference type="InterPro" id="IPR050214">
    <property type="entry name" value="Cys_Synth/Cystath_Beta-Synth"/>
</dbReference>
<dbReference type="InterPro" id="IPR005859">
    <property type="entry name" value="CysK"/>
</dbReference>
<dbReference type="InterPro" id="IPR001216">
    <property type="entry name" value="P-phosphate_BS"/>
</dbReference>
<dbReference type="InterPro" id="IPR001926">
    <property type="entry name" value="TrpB-like_PALP"/>
</dbReference>
<dbReference type="InterPro" id="IPR036052">
    <property type="entry name" value="TrpB-like_PALP_sf"/>
</dbReference>
<dbReference type="NCBIfam" id="TIGR01139">
    <property type="entry name" value="cysK"/>
    <property type="match status" value="1"/>
</dbReference>
<dbReference type="NCBIfam" id="TIGR01136">
    <property type="entry name" value="cysKM"/>
    <property type="match status" value="1"/>
</dbReference>
<dbReference type="PANTHER" id="PTHR10314">
    <property type="entry name" value="CYSTATHIONINE BETA-SYNTHASE"/>
    <property type="match status" value="1"/>
</dbReference>
<dbReference type="Pfam" id="PF00291">
    <property type="entry name" value="PALP"/>
    <property type="match status" value="1"/>
</dbReference>
<dbReference type="SUPFAM" id="SSF53686">
    <property type="entry name" value="Tryptophan synthase beta subunit-like PLP-dependent enzymes"/>
    <property type="match status" value="1"/>
</dbReference>
<dbReference type="PROSITE" id="PS00901">
    <property type="entry name" value="CYS_SYNTHASE"/>
    <property type="match status" value="1"/>
</dbReference>
<evidence type="ECO:0000250" key="1"/>
<evidence type="ECO:0000255" key="2"/>
<evidence type="ECO:0000269" key="3">
    <source>
    </source>
</evidence>
<evidence type="ECO:0000269" key="4">
    <source>
    </source>
</evidence>
<evidence type="ECO:0000305" key="5"/>
<protein>
    <recommendedName>
        <fullName>Bifunctional L-3-cyanoalanine synthase/cysteine synthase 1, mitochondrial</fullName>
        <ecNumber evidence="3 4">2.5.1.47</ecNumber>
        <ecNumber evidence="3 4">4.4.1.9</ecNumber>
    </recommendedName>
</protein>